<name>TRMN6_YERPN</name>
<organism>
    <name type="scientific">Yersinia pestis bv. Antiqua (strain Nepal516)</name>
    <dbReference type="NCBI Taxonomy" id="377628"/>
    <lineage>
        <taxon>Bacteria</taxon>
        <taxon>Pseudomonadati</taxon>
        <taxon>Pseudomonadota</taxon>
        <taxon>Gammaproteobacteria</taxon>
        <taxon>Enterobacterales</taxon>
        <taxon>Yersiniaceae</taxon>
        <taxon>Yersinia</taxon>
    </lineage>
</organism>
<comment type="function">
    <text evidence="1">Specifically methylates the adenine in position 37 of tRNA(1)(Val) (anticodon cmo5UAC).</text>
</comment>
<comment type="catalytic activity">
    <reaction evidence="1">
        <text>adenosine(37) in tRNA1(Val) + S-adenosyl-L-methionine = N(6)-methyladenosine(37) in tRNA1(Val) + S-adenosyl-L-homocysteine + H(+)</text>
        <dbReference type="Rhea" id="RHEA:43160"/>
        <dbReference type="Rhea" id="RHEA-COMP:10369"/>
        <dbReference type="Rhea" id="RHEA-COMP:10370"/>
        <dbReference type="ChEBI" id="CHEBI:15378"/>
        <dbReference type="ChEBI" id="CHEBI:57856"/>
        <dbReference type="ChEBI" id="CHEBI:59789"/>
        <dbReference type="ChEBI" id="CHEBI:74411"/>
        <dbReference type="ChEBI" id="CHEBI:74449"/>
        <dbReference type="EC" id="2.1.1.223"/>
    </reaction>
</comment>
<comment type="subcellular location">
    <subcellularLocation>
        <location evidence="1">Cytoplasm</location>
    </subcellularLocation>
</comment>
<comment type="similarity">
    <text evidence="1">Belongs to the methyltransferase superfamily. tRNA (adenine-N(6)-)-methyltransferase family.</text>
</comment>
<comment type="sequence caution" evidence="2">
    <conflict type="erroneous initiation">
        <sequence resource="EMBL-CDS" id="EEO77633"/>
    </conflict>
</comment>
<keyword id="KW-0963">Cytoplasm</keyword>
<keyword id="KW-0489">Methyltransferase</keyword>
<keyword id="KW-0949">S-adenosyl-L-methionine</keyword>
<keyword id="KW-0808">Transferase</keyword>
<keyword id="KW-0819">tRNA processing</keyword>
<reference key="1">
    <citation type="journal article" date="2006" name="J. Bacteriol.">
        <title>Complete genome sequence of Yersinia pestis strains Antiqua and Nepal516: evidence of gene reduction in an emerging pathogen.</title>
        <authorList>
            <person name="Chain P.S.G."/>
            <person name="Hu P."/>
            <person name="Malfatti S.A."/>
            <person name="Radnedge L."/>
            <person name="Larimer F."/>
            <person name="Vergez L.M."/>
            <person name="Worsham P."/>
            <person name="Chu M.C."/>
            <person name="Andersen G.L."/>
        </authorList>
    </citation>
    <scope>NUCLEOTIDE SEQUENCE [LARGE SCALE GENOMIC DNA]</scope>
    <source>
        <strain>Nepal516</strain>
    </source>
</reference>
<reference key="2">
    <citation type="submission" date="2009-04" db="EMBL/GenBank/DDBJ databases">
        <title>Yersinia pestis Nepal516A whole genome shotgun sequencing project.</title>
        <authorList>
            <person name="Plunkett G. III"/>
            <person name="Anderson B.D."/>
            <person name="Baumler D.J."/>
            <person name="Burland V."/>
            <person name="Cabot E.L."/>
            <person name="Glasner J.D."/>
            <person name="Mau B."/>
            <person name="Neeno-Eckwall E."/>
            <person name="Perna N.T."/>
            <person name="Munk A.C."/>
            <person name="Tapia R."/>
            <person name="Green L.D."/>
            <person name="Rogers Y.C."/>
            <person name="Detter J.C."/>
            <person name="Bruce D.C."/>
            <person name="Brettin T.S."/>
        </authorList>
    </citation>
    <scope>NUCLEOTIDE SEQUENCE [LARGE SCALE GENOMIC DNA]</scope>
    <source>
        <strain>Nepal516</strain>
    </source>
</reference>
<sequence>MGEQLKKQPVLRGGGFTFKQFFVAHDRCAMKVGTDGVLLGAWVPVLHARRVLDIGCGSGLIALMIAQRSLPQVQIDGVELEPAAAQQASSNVELSPWAERIHIHQQDIHQFAENHPHQYDLIVSNPPYFAPAIACRDEARDTARYTGSLTHDALLNCAEKLITEDGMFCVVLPHELGIEFARLAGQQGWFVRCQVDIRDRPGKPLHRMLLTLSRQAGETVYQHLALRQSEGVYSPEFCQLISDFYLNY</sequence>
<gene>
    <name type="ordered locus">YPN_1197</name>
    <name type="ORF">YP516_1310</name>
</gene>
<protein>
    <recommendedName>
        <fullName evidence="1">tRNA1(Val) (adenine(37)-N6)-methyltransferase</fullName>
        <ecNumber evidence="1">2.1.1.223</ecNumber>
    </recommendedName>
    <alternativeName>
        <fullName evidence="1">tRNA m6A37 methyltransferase</fullName>
    </alternativeName>
</protein>
<feature type="chain" id="PRO_0000387455" description="tRNA1(Val) (adenine(37)-N6)-methyltransferase">
    <location>
        <begin position="1"/>
        <end position="248"/>
    </location>
</feature>
<proteinExistence type="inferred from homology"/>
<accession>Q1CKF3</accession>
<accession>C4GRE2</accession>
<dbReference type="EC" id="2.1.1.223" evidence="1"/>
<dbReference type="EMBL" id="CP000305">
    <property type="protein sequence ID" value="ABG17527.1"/>
    <property type="molecule type" value="Genomic_DNA"/>
</dbReference>
<dbReference type="EMBL" id="ACNQ01000008">
    <property type="protein sequence ID" value="EEO77633.1"/>
    <property type="status" value="ALT_INIT"/>
    <property type="molecule type" value="Genomic_DNA"/>
</dbReference>
<dbReference type="SMR" id="Q1CKF3"/>
<dbReference type="KEGG" id="ypn:YPN_1197"/>
<dbReference type="HOGENOM" id="CLU_061983_0_0_6"/>
<dbReference type="Proteomes" id="UP000008936">
    <property type="component" value="Chromosome"/>
</dbReference>
<dbReference type="GO" id="GO:0005737">
    <property type="term" value="C:cytoplasm"/>
    <property type="evidence" value="ECO:0007669"/>
    <property type="project" value="UniProtKB-SubCell"/>
</dbReference>
<dbReference type="GO" id="GO:0003676">
    <property type="term" value="F:nucleic acid binding"/>
    <property type="evidence" value="ECO:0007669"/>
    <property type="project" value="InterPro"/>
</dbReference>
<dbReference type="GO" id="GO:0016430">
    <property type="term" value="F:tRNA (adenine-N6)-methyltransferase activity"/>
    <property type="evidence" value="ECO:0007669"/>
    <property type="project" value="UniProtKB-UniRule"/>
</dbReference>
<dbReference type="GO" id="GO:0032259">
    <property type="term" value="P:methylation"/>
    <property type="evidence" value="ECO:0007669"/>
    <property type="project" value="UniProtKB-KW"/>
</dbReference>
<dbReference type="GO" id="GO:0008033">
    <property type="term" value="P:tRNA processing"/>
    <property type="evidence" value="ECO:0007669"/>
    <property type="project" value="UniProtKB-UniRule"/>
</dbReference>
<dbReference type="CDD" id="cd02440">
    <property type="entry name" value="AdoMet_MTases"/>
    <property type="match status" value="1"/>
</dbReference>
<dbReference type="Gene3D" id="3.40.50.150">
    <property type="entry name" value="Vaccinia Virus protein VP39"/>
    <property type="match status" value="1"/>
</dbReference>
<dbReference type="HAMAP" id="MF_01872">
    <property type="entry name" value="tRNA_methyltr_YfiC"/>
    <property type="match status" value="1"/>
</dbReference>
<dbReference type="InterPro" id="IPR002052">
    <property type="entry name" value="DNA_methylase_N6_adenine_CS"/>
</dbReference>
<dbReference type="InterPro" id="IPR029063">
    <property type="entry name" value="SAM-dependent_MTases_sf"/>
</dbReference>
<dbReference type="InterPro" id="IPR007848">
    <property type="entry name" value="Small_mtfrase_dom"/>
</dbReference>
<dbReference type="InterPro" id="IPR050210">
    <property type="entry name" value="tRNA_Adenine-N(6)_MTase"/>
</dbReference>
<dbReference type="InterPro" id="IPR022882">
    <property type="entry name" value="tRNA_adenine-N6_MeTrfase"/>
</dbReference>
<dbReference type="NCBIfam" id="NF047853">
    <property type="entry name" value="tRm6a37MtseTrmN"/>
    <property type="match status" value="1"/>
</dbReference>
<dbReference type="PANTHER" id="PTHR47739">
    <property type="entry name" value="TRNA1(VAL) (ADENINE(37)-N6)-METHYLTRANSFERASE"/>
    <property type="match status" value="1"/>
</dbReference>
<dbReference type="PANTHER" id="PTHR47739:SF1">
    <property type="entry name" value="TRNA1(VAL) (ADENINE(37)-N6)-METHYLTRANSFERASE"/>
    <property type="match status" value="1"/>
</dbReference>
<dbReference type="Pfam" id="PF05175">
    <property type="entry name" value="MTS"/>
    <property type="match status" value="1"/>
</dbReference>
<dbReference type="PRINTS" id="PR00507">
    <property type="entry name" value="N12N6MTFRASE"/>
</dbReference>
<dbReference type="SUPFAM" id="SSF53335">
    <property type="entry name" value="S-adenosyl-L-methionine-dependent methyltransferases"/>
    <property type="match status" value="1"/>
</dbReference>
<dbReference type="PROSITE" id="PS00092">
    <property type="entry name" value="N6_MTASE"/>
    <property type="match status" value="1"/>
</dbReference>
<evidence type="ECO:0000255" key="1">
    <source>
        <dbReference type="HAMAP-Rule" id="MF_01872"/>
    </source>
</evidence>
<evidence type="ECO:0000305" key="2"/>